<gene>
    <name evidence="1" type="primary">atpA1</name>
    <name type="ordered locus">lmo0090</name>
</gene>
<reference key="1">
    <citation type="journal article" date="2001" name="Science">
        <title>Comparative genomics of Listeria species.</title>
        <authorList>
            <person name="Glaser P."/>
            <person name="Frangeul L."/>
            <person name="Buchrieser C."/>
            <person name="Rusniok C."/>
            <person name="Amend A."/>
            <person name="Baquero F."/>
            <person name="Berche P."/>
            <person name="Bloecker H."/>
            <person name="Brandt P."/>
            <person name="Chakraborty T."/>
            <person name="Charbit A."/>
            <person name="Chetouani F."/>
            <person name="Couve E."/>
            <person name="de Daruvar A."/>
            <person name="Dehoux P."/>
            <person name="Domann E."/>
            <person name="Dominguez-Bernal G."/>
            <person name="Duchaud E."/>
            <person name="Durant L."/>
            <person name="Dussurget O."/>
            <person name="Entian K.-D."/>
            <person name="Fsihi H."/>
            <person name="Garcia-del Portillo F."/>
            <person name="Garrido P."/>
            <person name="Gautier L."/>
            <person name="Goebel W."/>
            <person name="Gomez-Lopez N."/>
            <person name="Hain T."/>
            <person name="Hauf J."/>
            <person name="Jackson D."/>
            <person name="Jones L.-M."/>
            <person name="Kaerst U."/>
            <person name="Kreft J."/>
            <person name="Kuhn M."/>
            <person name="Kunst F."/>
            <person name="Kurapkat G."/>
            <person name="Madueno E."/>
            <person name="Maitournam A."/>
            <person name="Mata Vicente J."/>
            <person name="Ng E."/>
            <person name="Nedjari H."/>
            <person name="Nordsiek G."/>
            <person name="Novella S."/>
            <person name="de Pablos B."/>
            <person name="Perez-Diaz J.-C."/>
            <person name="Purcell R."/>
            <person name="Remmel B."/>
            <person name="Rose M."/>
            <person name="Schlueter T."/>
            <person name="Simoes N."/>
            <person name="Tierrez A."/>
            <person name="Vazquez-Boland J.-A."/>
            <person name="Voss H."/>
            <person name="Wehland J."/>
            <person name="Cossart P."/>
        </authorList>
    </citation>
    <scope>NUCLEOTIDE SEQUENCE [LARGE SCALE GENOMIC DNA]</scope>
    <source>
        <strain>ATCC BAA-679 / EGD-e</strain>
    </source>
</reference>
<feature type="chain" id="PRO_0000238279" description="ATP synthase subunit alpha 1">
    <location>
        <begin position="1"/>
        <end position="498"/>
    </location>
</feature>
<feature type="site" description="Required for activity" evidence="1">
    <location>
        <position position="357"/>
    </location>
</feature>
<accession>Q8YAM8</accession>
<dbReference type="EC" id="7.1.2.2" evidence="1"/>
<dbReference type="EMBL" id="AL591973">
    <property type="protein sequence ID" value="CAC98305.1"/>
    <property type="molecule type" value="Genomic_DNA"/>
</dbReference>
<dbReference type="PIR" id="AC1086">
    <property type="entry name" value="AC1086"/>
</dbReference>
<dbReference type="RefSeq" id="NP_463623.1">
    <property type="nucleotide sequence ID" value="NC_003210.1"/>
</dbReference>
<dbReference type="RefSeq" id="WP_003721716.1">
    <property type="nucleotide sequence ID" value="NZ_CP149495.1"/>
</dbReference>
<dbReference type="SMR" id="Q8YAM8"/>
<dbReference type="STRING" id="169963.gene:17592726"/>
<dbReference type="PaxDb" id="169963-lmo0090"/>
<dbReference type="EnsemblBacteria" id="CAC98305">
    <property type="protein sequence ID" value="CAC98305"/>
    <property type="gene ID" value="CAC98305"/>
</dbReference>
<dbReference type="GeneID" id="986589"/>
<dbReference type="KEGG" id="lmo:lmo0090"/>
<dbReference type="PATRIC" id="fig|169963.11.peg.93"/>
<dbReference type="eggNOG" id="COG0056">
    <property type="taxonomic scope" value="Bacteria"/>
</dbReference>
<dbReference type="HOGENOM" id="CLU_010091_2_1_9"/>
<dbReference type="OrthoDB" id="9802718at2"/>
<dbReference type="PhylomeDB" id="Q8YAM8"/>
<dbReference type="BioCyc" id="LMON169963:LMO0090-MONOMER"/>
<dbReference type="Proteomes" id="UP000000817">
    <property type="component" value="Chromosome"/>
</dbReference>
<dbReference type="GO" id="GO:0005886">
    <property type="term" value="C:plasma membrane"/>
    <property type="evidence" value="ECO:0007669"/>
    <property type="project" value="UniProtKB-SubCell"/>
</dbReference>
<dbReference type="GO" id="GO:0045259">
    <property type="term" value="C:proton-transporting ATP synthase complex"/>
    <property type="evidence" value="ECO:0007669"/>
    <property type="project" value="UniProtKB-KW"/>
</dbReference>
<dbReference type="GO" id="GO:0043531">
    <property type="term" value="F:ADP binding"/>
    <property type="evidence" value="ECO:0000318"/>
    <property type="project" value="GO_Central"/>
</dbReference>
<dbReference type="GO" id="GO:0005524">
    <property type="term" value="F:ATP binding"/>
    <property type="evidence" value="ECO:0000318"/>
    <property type="project" value="GO_Central"/>
</dbReference>
<dbReference type="GO" id="GO:0046933">
    <property type="term" value="F:proton-transporting ATP synthase activity, rotational mechanism"/>
    <property type="evidence" value="ECO:0007669"/>
    <property type="project" value="UniProtKB-UniRule"/>
</dbReference>
<dbReference type="GO" id="GO:0015986">
    <property type="term" value="P:proton motive force-driven ATP synthesis"/>
    <property type="evidence" value="ECO:0000318"/>
    <property type="project" value="GO_Central"/>
</dbReference>
<dbReference type="CDD" id="cd18113">
    <property type="entry name" value="ATP-synt_F1_alpha_C"/>
    <property type="match status" value="1"/>
</dbReference>
<dbReference type="CDD" id="cd01132">
    <property type="entry name" value="F1-ATPase_alpha_CD"/>
    <property type="match status" value="1"/>
</dbReference>
<dbReference type="FunFam" id="3.40.50.300:FF:000002">
    <property type="entry name" value="ATP synthase subunit alpha"/>
    <property type="match status" value="1"/>
</dbReference>
<dbReference type="Gene3D" id="2.40.30.20">
    <property type="match status" value="1"/>
</dbReference>
<dbReference type="Gene3D" id="1.20.150.20">
    <property type="entry name" value="ATP synthase alpha/beta chain, C-terminal domain"/>
    <property type="match status" value="1"/>
</dbReference>
<dbReference type="Gene3D" id="3.40.50.300">
    <property type="entry name" value="P-loop containing nucleotide triphosphate hydrolases"/>
    <property type="match status" value="1"/>
</dbReference>
<dbReference type="HAMAP" id="MF_01346">
    <property type="entry name" value="ATP_synth_alpha_bact"/>
    <property type="match status" value="1"/>
</dbReference>
<dbReference type="InterPro" id="IPR023366">
    <property type="entry name" value="ATP_synth_asu-like_sf"/>
</dbReference>
<dbReference type="InterPro" id="IPR000793">
    <property type="entry name" value="ATP_synth_asu_C"/>
</dbReference>
<dbReference type="InterPro" id="IPR038376">
    <property type="entry name" value="ATP_synth_asu_C_sf"/>
</dbReference>
<dbReference type="InterPro" id="IPR033732">
    <property type="entry name" value="ATP_synth_F1_a_nt-bd_dom"/>
</dbReference>
<dbReference type="InterPro" id="IPR005294">
    <property type="entry name" value="ATP_synth_F1_asu"/>
</dbReference>
<dbReference type="InterPro" id="IPR020003">
    <property type="entry name" value="ATPase_a/bsu_AS"/>
</dbReference>
<dbReference type="InterPro" id="IPR036121">
    <property type="entry name" value="ATPase_F1/V1/A1_a/bsu_N_sf"/>
</dbReference>
<dbReference type="InterPro" id="IPR000194">
    <property type="entry name" value="ATPase_F1/V1/A1_a/bsu_nucl-bd"/>
</dbReference>
<dbReference type="InterPro" id="IPR027417">
    <property type="entry name" value="P-loop_NTPase"/>
</dbReference>
<dbReference type="NCBIfam" id="TIGR00962">
    <property type="entry name" value="atpA"/>
    <property type="match status" value="1"/>
</dbReference>
<dbReference type="NCBIfam" id="NF009884">
    <property type="entry name" value="PRK13343.1"/>
    <property type="match status" value="1"/>
</dbReference>
<dbReference type="PANTHER" id="PTHR48082">
    <property type="entry name" value="ATP SYNTHASE SUBUNIT ALPHA, MITOCHONDRIAL"/>
    <property type="match status" value="1"/>
</dbReference>
<dbReference type="PANTHER" id="PTHR48082:SF2">
    <property type="entry name" value="ATP SYNTHASE SUBUNIT ALPHA, MITOCHONDRIAL"/>
    <property type="match status" value="1"/>
</dbReference>
<dbReference type="Pfam" id="PF00006">
    <property type="entry name" value="ATP-synt_ab"/>
    <property type="match status" value="1"/>
</dbReference>
<dbReference type="Pfam" id="PF00306">
    <property type="entry name" value="ATP-synt_ab_C"/>
    <property type="match status" value="1"/>
</dbReference>
<dbReference type="SUPFAM" id="SSF47917">
    <property type="entry name" value="C-terminal domain of alpha and beta subunits of F1 ATP synthase"/>
    <property type="match status" value="1"/>
</dbReference>
<dbReference type="SUPFAM" id="SSF50615">
    <property type="entry name" value="N-terminal domain of alpha and beta subunits of F1 ATP synthase"/>
    <property type="match status" value="1"/>
</dbReference>
<dbReference type="SUPFAM" id="SSF52540">
    <property type="entry name" value="P-loop containing nucleoside triphosphate hydrolases"/>
    <property type="match status" value="1"/>
</dbReference>
<dbReference type="PROSITE" id="PS00152">
    <property type="entry name" value="ATPASE_ALPHA_BETA"/>
    <property type="match status" value="1"/>
</dbReference>
<evidence type="ECO:0000255" key="1">
    <source>
        <dbReference type="HAMAP-Rule" id="MF_01346"/>
    </source>
</evidence>
<name>ATPA1_LISMO</name>
<sequence length="498" mass="55098">MKTIHFDMNKYETHVDLEYLKEHGRVEKISDGVIFCSGLENAALHQAVLIDERHRGVILELNEEFVGIGLIDKTNDILEGMHVGVSGKFIEVDLFEEMAGRIIDTTGKMLYEESEEKPTATSPLFCVTPAIMTIDSVTRPLNTGLAVIDSITPIGRGQRQLILGNRQSGKTQIAVDTIINQHDQNVHCIYVAIGLKAAYIAEVIETLRNHGAMEYSTVVATAASDSLTAQYLTPYAGMALAEALRDQGKDVLIILDDLTKHADAYRAITLLFNRPPGREAYPGDSFYIHSSLLERAVQMNEEHGGGSITAIPMIETLSDDVTAYIPTNVISITDGQLFLKSDLFNRGQKPAVDVGVSVSRIGGDAQHPIIRKLSKNLTLILSQFEELKELLDFGNALDDGSMKMVSDGRLLTELFKQKILSPLSVTELIVILYAFQNGFLTKIPPANIQTFKGLLLEKAHMHKDFESFSAQIEAINELNESHVEMLEEIIRETGRLFS</sequence>
<organism>
    <name type="scientific">Listeria monocytogenes serovar 1/2a (strain ATCC BAA-679 / EGD-e)</name>
    <dbReference type="NCBI Taxonomy" id="169963"/>
    <lineage>
        <taxon>Bacteria</taxon>
        <taxon>Bacillati</taxon>
        <taxon>Bacillota</taxon>
        <taxon>Bacilli</taxon>
        <taxon>Bacillales</taxon>
        <taxon>Listeriaceae</taxon>
        <taxon>Listeria</taxon>
    </lineage>
</organism>
<protein>
    <recommendedName>
        <fullName evidence="1">ATP synthase subunit alpha 1</fullName>
        <ecNumber evidence="1">7.1.2.2</ecNumber>
    </recommendedName>
    <alternativeName>
        <fullName evidence="1">ATP synthase F1 sector subunit alpha 1</fullName>
    </alternativeName>
    <alternativeName>
        <fullName evidence="1">F-ATPase subunit alpha 1</fullName>
    </alternativeName>
</protein>
<proteinExistence type="inferred from homology"/>
<keyword id="KW-0066">ATP synthesis</keyword>
<keyword id="KW-0067">ATP-binding</keyword>
<keyword id="KW-1003">Cell membrane</keyword>
<keyword id="KW-0139">CF(1)</keyword>
<keyword id="KW-0375">Hydrogen ion transport</keyword>
<keyword id="KW-0406">Ion transport</keyword>
<keyword id="KW-0472">Membrane</keyword>
<keyword id="KW-0547">Nucleotide-binding</keyword>
<keyword id="KW-1185">Reference proteome</keyword>
<keyword id="KW-1278">Translocase</keyword>
<keyword id="KW-0813">Transport</keyword>
<comment type="function">
    <text evidence="1">Produces ATP from ADP in the presence of a proton gradient across the membrane. The alpha chain is a regulatory subunit.</text>
</comment>
<comment type="catalytic activity">
    <reaction evidence="1">
        <text>ATP + H2O + 4 H(+)(in) = ADP + phosphate + 5 H(+)(out)</text>
        <dbReference type="Rhea" id="RHEA:57720"/>
        <dbReference type="ChEBI" id="CHEBI:15377"/>
        <dbReference type="ChEBI" id="CHEBI:15378"/>
        <dbReference type="ChEBI" id="CHEBI:30616"/>
        <dbReference type="ChEBI" id="CHEBI:43474"/>
        <dbReference type="ChEBI" id="CHEBI:456216"/>
        <dbReference type="EC" id="7.1.2.2"/>
    </reaction>
</comment>
<comment type="subunit">
    <text evidence="1">F-type ATPases have 2 components, CF(1) - the catalytic core - and CF(0) - the membrane proton channel. CF(1) has five subunits: alpha(3), beta(3), gamma(1), delta(1), epsilon(1). CF(0) has three main subunits: a(1), b(2) and c(9-12). The alpha and beta chains form an alternating ring which encloses part of the gamma chain. CF(1) is attached to CF(0) by a central stalk formed by the gamma and epsilon chains, while a peripheral stalk is formed by the delta and b chains.</text>
</comment>
<comment type="subcellular location">
    <subcellularLocation>
        <location evidence="1">Cell membrane</location>
        <topology evidence="1">Peripheral membrane protein</topology>
    </subcellularLocation>
</comment>
<comment type="similarity">
    <text evidence="1">Belongs to the ATPase alpha/beta chains family.</text>
</comment>